<reference key="1">
    <citation type="journal article" date="1987" name="J. Bacteriol.">
        <title>The blue copper protein gene of Alcaligenes faecalis S-6 directs secretion of blue copper protein from Escherichia coli cells.</title>
        <authorList>
            <person name="Yamamoto K."/>
            <person name="Uozumi T."/>
            <person name="Beppu T."/>
        </authorList>
    </citation>
    <scope>NUCLEOTIDE SEQUENCE [GENOMIC DNA]</scope>
    <source>
        <strain>S-6</strain>
    </source>
</reference>
<reference key="2">
    <citation type="journal article" date="1986" name="FEBS Lett.">
        <title>The amino acid sequence of the blue copper protein of Alcaligenes faecalis.</title>
        <authorList>
            <person name="Hormel S."/>
            <person name="Adman E.T."/>
            <person name="Walsh K.A."/>
            <person name="Beppu T."/>
            <person name="Titani K."/>
        </authorList>
    </citation>
    <scope>PROTEIN SEQUENCE OF 24-146</scope>
    <source>
        <strain>S-6</strain>
    </source>
</reference>
<reference key="3">
    <citation type="journal article" date="1987" name="FEBS Lett.">
        <title>The crystal structure of pseudoazurin from Alcaligenes faecalis S-6 determined at 2.9-A resolution.</title>
        <authorList>
            <person name="Petratos K."/>
            <person name="Banner D.W."/>
            <person name="Beppu T."/>
            <person name="Wilson K.S."/>
            <person name="Tsernoglou D."/>
        </authorList>
    </citation>
    <scope>X-RAY CRYSTALLOGRAPHY (2.9 ANGSTROMS)</scope>
    <source>
        <strain>S-6</strain>
    </source>
</reference>
<reference key="4">
    <citation type="journal article" date="1989" name="J. Biol. Chem.">
        <title>A 2.0-A structure of the blue copper protein (cupredoxin) from Alcaligenes faecalis S-6.</title>
        <authorList>
            <person name="Adman E.T."/>
            <person name="Turley S."/>
            <person name="Bramson R."/>
            <person name="Petratos K."/>
            <person name="Banner D."/>
            <person name="Tsernoglou D."/>
            <person name="Beppu T."/>
            <person name="Watanabe H."/>
        </authorList>
    </citation>
    <scope>X-RAY CRYSTALLOGRAPHY (2.0 ANGSTROMS)</scope>
    <source>
        <strain>S-6</strain>
    </source>
</reference>
<keyword id="KW-0002">3D-structure</keyword>
<keyword id="KW-0186">Copper</keyword>
<keyword id="KW-0903">Direct protein sequencing</keyword>
<keyword id="KW-0249">Electron transport</keyword>
<keyword id="KW-0479">Metal-binding</keyword>
<keyword id="KW-0574">Periplasm</keyword>
<keyword id="KW-0732">Signal</keyword>
<keyword id="KW-0813">Transport</keyword>
<comment type="function">
    <text>This soluble electron transfer copper protein is required for the inactivation of copper-containing nitrite reductase in the presence of oxygen. Serves as a direct electron donor to the nitrite reductase.</text>
</comment>
<comment type="cofactor">
    <cofactor>
        <name>Cu cation</name>
        <dbReference type="ChEBI" id="CHEBI:23378"/>
    </cofactor>
    <text>Binds 1 copper ion per subunit.</text>
</comment>
<comment type="subcellular location">
    <subcellularLocation>
        <location>Periplasm</location>
    </subcellularLocation>
</comment>
<comment type="induction">
    <text>Under anaerobic growth conditions and by nitrite.</text>
</comment>
<sequence>MRNIAIKFAAAGILAMLAAPALAENIEVHMLNKGAEGAMVFEPAYIKANPGDTVTFIPVDKGHNVESIKDMIPEGAEKFKSKINENYVLTVTQPGAYLVKCTPHYAMGMIALIAVGDSPANLDQIVSAKKPKIVQERLEKVIASAK</sequence>
<feature type="signal peptide" evidence="2">
    <location>
        <begin position="1"/>
        <end position="23"/>
    </location>
</feature>
<feature type="chain" id="PRO_0000002849" description="Pseudoazurin">
    <location>
        <begin position="24"/>
        <end position="146"/>
    </location>
</feature>
<feature type="domain" description="Plastocyanin-like">
    <location>
        <begin position="28"/>
        <end position="116"/>
    </location>
</feature>
<feature type="binding site" evidence="1">
    <location>
        <position position="63"/>
    </location>
    <ligand>
        <name>Cu cation</name>
        <dbReference type="ChEBI" id="CHEBI:23378"/>
    </ligand>
</feature>
<feature type="binding site" evidence="1">
    <location>
        <position position="101"/>
    </location>
    <ligand>
        <name>Cu cation</name>
        <dbReference type="ChEBI" id="CHEBI:23378"/>
    </ligand>
</feature>
<feature type="binding site" evidence="1">
    <location>
        <position position="104"/>
    </location>
    <ligand>
        <name>Cu cation</name>
        <dbReference type="ChEBI" id="CHEBI:23378"/>
    </ligand>
</feature>
<feature type="binding site" evidence="1">
    <location>
        <position position="109"/>
    </location>
    <ligand>
        <name>Cu cation</name>
        <dbReference type="ChEBI" id="CHEBI:23378"/>
    </ligand>
</feature>
<feature type="strand" evidence="3">
    <location>
        <begin position="25"/>
        <end position="34"/>
    </location>
</feature>
<feature type="strand" evidence="3">
    <location>
        <begin position="37"/>
        <end position="48"/>
    </location>
</feature>
<feature type="strand" evidence="3">
    <location>
        <begin position="53"/>
        <end position="57"/>
    </location>
</feature>
<feature type="strand" evidence="3">
    <location>
        <begin position="59"/>
        <end position="62"/>
    </location>
</feature>
<feature type="strand" evidence="3">
    <location>
        <begin position="87"/>
        <end position="90"/>
    </location>
</feature>
<feature type="strand" evidence="3">
    <location>
        <begin position="93"/>
        <end position="100"/>
    </location>
</feature>
<feature type="turn" evidence="3">
    <location>
        <begin position="102"/>
        <end position="104"/>
    </location>
</feature>
<feature type="helix" evidence="3">
    <location>
        <begin position="105"/>
        <end position="107"/>
    </location>
</feature>
<feature type="strand" evidence="3">
    <location>
        <begin position="110"/>
        <end position="118"/>
    </location>
</feature>
<feature type="helix" evidence="3">
    <location>
        <begin position="122"/>
        <end position="127"/>
    </location>
</feature>
<feature type="helix" evidence="3">
    <location>
        <begin position="132"/>
        <end position="145"/>
    </location>
</feature>
<organism>
    <name type="scientific">Alcaligenes faecalis</name>
    <dbReference type="NCBI Taxonomy" id="511"/>
    <lineage>
        <taxon>Bacteria</taxon>
        <taxon>Pseudomonadati</taxon>
        <taxon>Pseudomonadota</taxon>
        <taxon>Betaproteobacteria</taxon>
        <taxon>Burkholderiales</taxon>
        <taxon>Alcaligenaceae</taxon>
        <taxon>Alcaligenes</taxon>
    </lineage>
</organism>
<dbReference type="EMBL" id="M18267">
    <property type="protein sequence ID" value="AAA21955.1"/>
    <property type="molecule type" value="Genomic_DNA"/>
</dbReference>
<dbReference type="PIR" id="A28385">
    <property type="entry name" value="CUALBF"/>
</dbReference>
<dbReference type="PDB" id="1PAZ">
    <property type="method" value="X-ray"/>
    <property type="resolution" value="1.55 A"/>
    <property type="chains" value="A=24-146"/>
</dbReference>
<dbReference type="PDB" id="1PY0">
    <property type="method" value="X-ray"/>
    <property type="resolution" value="2.00 A"/>
    <property type="chains" value="A=24-146"/>
</dbReference>
<dbReference type="PDB" id="1PZA">
    <property type="method" value="X-ray"/>
    <property type="resolution" value="1.80 A"/>
    <property type="chains" value="A=24-146"/>
</dbReference>
<dbReference type="PDB" id="1PZB">
    <property type="method" value="X-ray"/>
    <property type="resolution" value="1.80 A"/>
    <property type="chains" value="A=24-146"/>
</dbReference>
<dbReference type="PDB" id="1PZC">
    <property type="method" value="X-ray"/>
    <property type="resolution" value="1.85 A"/>
    <property type="chains" value="A=24-146"/>
</dbReference>
<dbReference type="PDB" id="2P80">
    <property type="method" value="NMR"/>
    <property type="chains" value="D=24-146"/>
</dbReference>
<dbReference type="PDB" id="3NYK">
    <property type="method" value="X-ray"/>
    <property type="resolution" value="1.86 A"/>
    <property type="chains" value="A=24-146"/>
</dbReference>
<dbReference type="PDB" id="3PAZ">
    <property type="method" value="X-ray"/>
    <property type="resolution" value="1.73 A"/>
    <property type="chains" value="A=24-146"/>
</dbReference>
<dbReference type="PDB" id="4PAZ">
    <property type="method" value="X-ray"/>
    <property type="resolution" value="1.76 A"/>
    <property type="chains" value="A=24-146"/>
</dbReference>
<dbReference type="PDB" id="4RH4">
    <property type="method" value="X-ray"/>
    <property type="resolution" value="1.60 A"/>
    <property type="chains" value="A=24-146"/>
</dbReference>
<dbReference type="PDB" id="5PAZ">
    <property type="method" value="X-ray"/>
    <property type="resolution" value="1.76 A"/>
    <property type="chains" value="A=24-146"/>
</dbReference>
<dbReference type="PDB" id="5X31">
    <property type="method" value="X-ray"/>
    <property type="resolution" value="2.60 A"/>
    <property type="chains" value="A/B=24-146"/>
</dbReference>
<dbReference type="PDB" id="6PAZ">
    <property type="method" value="X-ray"/>
    <property type="resolution" value="1.91 A"/>
    <property type="chains" value="A=24-146"/>
</dbReference>
<dbReference type="PDB" id="7PAZ">
    <property type="method" value="X-ray"/>
    <property type="resolution" value="2.00 A"/>
    <property type="chains" value="A=24-146"/>
</dbReference>
<dbReference type="PDB" id="8K9N">
    <property type="method" value="X-ray"/>
    <property type="resolution" value="0.86 A"/>
    <property type="chains" value="A=24-146"/>
</dbReference>
<dbReference type="PDB" id="8K9P">
    <property type="method" value="Other"/>
    <property type="resolution" value="1.50 A"/>
    <property type="chains" value="A=24-146"/>
</dbReference>
<dbReference type="PDB" id="8PAZ">
    <property type="method" value="X-ray"/>
    <property type="resolution" value="1.60 A"/>
    <property type="chains" value="A=24-146"/>
</dbReference>
<dbReference type="PDBsum" id="1PAZ"/>
<dbReference type="PDBsum" id="1PY0"/>
<dbReference type="PDBsum" id="1PZA"/>
<dbReference type="PDBsum" id="1PZB"/>
<dbReference type="PDBsum" id="1PZC"/>
<dbReference type="PDBsum" id="2P80"/>
<dbReference type="PDBsum" id="3NYK"/>
<dbReference type="PDBsum" id="3PAZ"/>
<dbReference type="PDBsum" id="4PAZ"/>
<dbReference type="PDBsum" id="4RH4"/>
<dbReference type="PDBsum" id="5PAZ"/>
<dbReference type="PDBsum" id="5X31"/>
<dbReference type="PDBsum" id="6PAZ"/>
<dbReference type="PDBsum" id="7PAZ"/>
<dbReference type="PDBsum" id="8K9N"/>
<dbReference type="PDBsum" id="8K9P"/>
<dbReference type="PDBsum" id="8PAZ"/>
<dbReference type="BMRB" id="P04377"/>
<dbReference type="SMR" id="P04377"/>
<dbReference type="DrugBank" id="DB04229">
    <property type="generic name" value="7,10,13-Tri(Carboxymethyl)-5,15-Dioxo-4,7,10,13,16-Pentaaza-1,19-Dithianonadecane"/>
</dbReference>
<dbReference type="EvolutionaryTrace" id="P04377"/>
<dbReference type="GO" id="GO:0042597">
    <property type="term" value="C:periplasmic space"/>
    <property type="evidence" value="ECO:0007669"/>
    <property type="project" value="UniProtKB-SubCell"/>
</dbReference>
<dbReference type="GO" id="GO:0005507">
    <property type="term" value="F:copper ion binding"/>
    <property type="evidence" value="ECO:0007669"/>
    <property type="project" value="InterPro"/>
</dbReference>
<dbReference type="GO" id="GO:0009055">
    <property type="term" value="F:electron transfer activity"/>
    <property type="evidence" value="ECO:0007669"/>
    <property type="project" value="InterPro"/>
</dbReference>
<dbReference type="CDD" id="cd04218">
    <property type="entry name" value="Pseudoazurin"/>
    <property type="match status" value="1"/>
</dbReference>
<dbReference type="Gene3D" id="2.60.40.420">
    <property type="entry name" value="Cupredoxins - blue copper proteins"/>
    <property type="match status" value="1"/>
</dbReference>
<dbReference type="InterPro" id="IPR002386">
    <property type="entry name" value="Amicyanin/Pseudoazurin"/>
</dbReference>
<dbReference type="InterPro" id="IPR000923">
    <property type="entry name" value="BlueCu_1"/>
</dbReference>
<dbReference type="InterPro" id="IPR028871">
    <property type="entry name" value="BlueCu_1_BS"/>
</dbReference>
<dbReference type="InterPro" id="IPR001235">
    <property type="entry name" value="Copper_blue_Plastocyanin"/>
</dbReference>
<dbReference type="InterPro" id="IPR008972">
    <property type="entry name" value="Cupredoxin"/>
</dbReference>
<dbReference type="InterPro" id="IPR012745">
    <property type="entry name" value="Pseudoazurin"/>
</dbReference>
<dbReference type="NCBIfam" id="TIGR02375">
    <property type="entry name" value="pseudoazurin"/>
    <property type="match status" value="1"/>
</dbReference>
<dbReference type="Pfam" id="PF00127">
    <property type="entry name" value="Copper-bind"/>
    <property type="match status" value="1"/>
</dbReference>
<dbReference type="PRINTS" id="PR00155">
    <property type="entry name" value="AMICYANIN"/>
</dbReference>
<dbReference type="PRINTS" id="PR00156">
    <property type="entry name" value="COPPERBLUE"/>
</dbReference>
<dbReference type="SUPFAM" id="SSF49503">
    <property type="entry name" value="Cupredoxins"/>
    <property type="match status" value="1"/>
</dbReference>
<dbReference type="PROSITE" id="PS00196">
    <property type="entry name" value="COPPER_BLUE"/>
    <property type="match status" value="1"/>
</dbReference>
<evidence type="ECO:0000269" key="1">
    <source>
    </source>
</evidence>
<evidence type="ECO:0000269" key="2">
    <source>
    </source>
</evidence>
<evidence type="ECO:0007829" key="3">
    <source>
        <dbReference type="PDB" id="8K9N"/>
    </source>
</evidence>
<proteinExistence type="evidence at protein level"/>
<accession>P04377</accession>
<name>AZUP_ALCFA</name>
<protein>
    <recommendedName>
        <fullName>Pseudoazurin</fullName>
    </recommendedName>
    <alternativeName>
        <fullName>Blue copper protein</fullName>
    </alternativeName>
    <alternativeName>
        <fullName>Cupredoxin</fullName>
    </alternativeName>
</protein>